<name>HIS4_BREBN</name>
<reference key="1">
    <citation type="submission" date="2005-03" db="EMBL/GenBank/DDBJ databases">
        <title>Brevibacillus brevis strain 47, complete genome.</title>
        <authorList>
            <person name="Hosoyama A."/>
            <person name="Yamada R."/>
            <person name="Hongo Y."/>
            <person name="Terui Y."/>
            <person name="Ankai A."/>
            <person name="Masuyama W."/>
            <person name="Sekiguchi M."/>
            <person name="Takeda T."/>
            <person name="Asano K."/>
            <person name="Ohji S."/>
            <person name="Ichikawa N."/>
            <person name="Narita S."/>
            <person name="Aoki N."/>
            <person name="Miura H."/>
            <person name="Matsushita S."/>
            <person name="Sekigawa T."/>
            <person name="Yamagata H."/>
            <person name="Yoshikawa H."/>
            <person name="Udaka S."/>
            <person name="Tanikawa S."/>
            <person name="Fujita N."/>
        </authorList>
    </citation>
    <scope>NUCLEOTIDE SEQUENCE [LARGE SCALE GENOMIC DNA]</scope>
    <source>
        <strain>47 / JCM 6285 / NBRC 100599</strain>
    </source>
</reference>
<feature type="chain" id="PRO_1000148956" description="1-(5-phosphoribosyl)-5-[(5-phosphoribosylamino)methylideneamino] imidazole-4-carboxamide isomerase">
    <location>
        <begin position="1"/>
        <end position="249"/>
    </location>
</feature>
<feature type="active site" description="Proton acceptor" evidence="1">
    <location>
        <position position="10"/>
    </location>
</feature>
<feature type="active site" description="Proton donor" evidence="1">
    <location>
        <position position="131"/>
    </location>
</feature>
<evidence type="ECO:0000255" key="1">
    <source>
        <dbReference type="HAMAP-Rule" id="MF_01014"/>
    </source>
</evidence>
<gene>
    <name evidence="1" type="primary">hisA</name>
    <name type="ordered locus">BBR47_52670</name>
</gene>
<keyword id="KW-0028">Amino-acid biosynthesis</keyword>
<keyword id="KW-0963">Cytoplasm</keyword>
<keyword id="KW-0368">Histidine biosynthesis</keyword>
<keyword id="KW-0413">Isomerase</keyword>
<keyword id="KW-1185">Reference proteome</keyword>
<sequence>MSFIVYPAIDIRGGKCVRLFQGDYGQETVYADSPLAMAKRWVEQGASWVHLVDLDGAKEGKPANAAIIKEIARSIPVPVQVGGGIRTEEQIADYLEAGVARVIVGTAAIEDEPFTKRILQNDGDKIAIGLDCRNGLVATRGWLTTTDVQATELAKRLVTYGAETFIYTDIARDGTMTGPNVEEIAALAMATGKSVIASGGVSQLDDLLTLATHASDGVSGAIVGKALYTDAFTLEEALQRMEGRESYAG</sequence>
<proteinExistence type="inferred from homology"/>
<organism>
    <name type="scientific">Brevibacillus brevis (strain 47 / JCM 6285 / NBRC 100599)</name>
    <dbReference type="NCBI Taxonomy" id="358681"/>
    <lineage>
        <taxon>Bacteria</taxon>
        <taxon>Bacillati</taxon>
        <taxon>Bacillota</taxon>
        <taxon>Bacilli</taxon>
        <taxon>Bacillales</taxon>
        <taxon>Paenibacillaceae</taxon>
        <taxon>Brevibacillus</taxon>
    </lineage>
</organism>
<comment type="catalytic activity">
    <reaction evidence="1">
        <text>1-(5-phospho-beta-D-ribosyl)-5-[(5-phospho-beta-D-ribosylamino)methylideneamino]imidazole-4-carboxamide = 5-[(5-phospho-1-deoxy-D-ribulos-1-ylimino)methylamino]-1-(5-phospho-beta-D-ribosyl)imidazole-4-carboxamide</text>
        <dbReference type="Rhea" id="RHEA:15469"/>
        <dbReference type="ChEBI" id="CHEBI:58435"/>
        <dbReference type="ChEBI" id="CHEBI:58525"/>
        <dbReference type="EC" id="5.3.1.16"/>
    </reaction>
</comment>
<comment type="pathway">
    <text evidence="1">Amino-acid biosynthesis; L-histidine biosynthesis; L-histidine from 5-phospho-alpha-D-ribose 1-diphosphate: step 4/9.</text>
</comment>
<comment type="subcellular location">
    <subcellularLocation>
        <location evidence="1">Cytoplasm</location>
    </subcellularLocation>
</comment>
<comment type="similarity">
    <text evidence="1">Belongs to the HisA/HisF family.</text>
</comment>
<accession>C0Z6P5</accession>
<dbReference type="EC" id="5.3.1.16" evidence="1"/>
<dbReference type="EMBL" id="AP008955">
    <property type="protein sequence ID" value="BAH46244.1"/>
    <property type="molecule type" value="Genomic_DNA"/>
</dbReference>
<dbReference type="RefSeq" id="WP_015893494.1">
    <property type="nucleotide sequence ID" value="NC_012491.1"/>
</dbReference>
<dbReference type="SMR" id="C0Z6P5"/>
<dbReference type="STRING" id="358681.BBR47_52670"/>
<dbReference type="KEGG" id="bbe:BBR47_52670"/>
<dbReference type="eggNOG" id="COG0106">
    <property type="taxonomic scope" value="Bacteria"/>
</dbReference>
<dbReference type="HOGENOM" id="CLU_048577_1_1_9"/>
<dbReference type="UniPathway" id="UPA00031">
    <property type="reaction ID" value="UER00009"/>
</dbReference>
<dbReference type="Proteomes" id="UP000001877">
    <property type="component" value="Chromosome"/>
</dbReference>
<dbReference type="GO" id="GO:0005737">
    <property type="term" value="C:cytoplasm"/>
    <property type="evidence" value="ECO:0007669"/>
    <property type="project" value="UniProtKB-SubCell"/>
</dbReference>
<dbReference type="GO" id="GO:0003949">
    <property type="term" value="F:1-(5-phosphoribosyl)-5-[(5-phosphoribosylamino)methylideneamino]imidazole-4-carboxamide isomerase activity"/>
    <property type="evidence" value="ECO:0007669"/>
    <property type="project" value="UniProtKB-UniRule"/>
</dbReference>
<dbReference type="GO" id="GO:0000105">
    <property type="term" value="P:L-histidine biosynthetic process"/>
    <property type="evidence" value="ECO:0007669"/>
    <property type="project" value="UniProtKB-UniRule"/>
</dbReference>
<dbReference type="GO" id="GO:0000162">
    <property type="term" value="P:L-tryptophan biosynthetic process"/>
    <property type="evidence" value="ECO:0007669"/>
    <property type="project" value="TreeGrafter"/>
</dbReference>
<dbReference type="CDD" id="cd04732">
    <property type="entry name" value="HisA"/>
    <property type="match status" value="1"/>
</dbReference>
<dbReference type="FunFam" id="3.20.20.70:FF:000009">
    <property type="entry name" value="1-(5-phosphoribosyl)-5-[(5-phosphoribosylamino)methylideneamino] imidazole-4-carboxamide isomerase"/>
    <property type="match status" value="1"/>
</dbReference>
<dbReference type="Gene3D" id="3.20.20.70">
    <property type="entry name" value="Aldolase class I"/>
    <property type="match status" value="1"/>
</dbReference>
<dbReference type="HAMAP" id="MF_01014">
    <property type="entry name" value="HisA"/>
    <property type="match status" value="1"/>
</dbReference>
<dbReference type="InterPro" id="IPR013785">
    <property type="entry name" value="Aldolase_TIM"/>
</dbReference>
<dbReference type="InterPro" id="IPR006062">
    <property type="entry name" value="His_biosynth"/>
</dbReference>
<dbReference type="InterPro" id="IPR006063">
    <property type="entry name" value="HisA_bact_arch"/>
</dbReference>
<dbReference type="InterPro" id="IPR044524">
    <property type="entry name" value="Isoase_HisA-like"/>
</dbReference>
<dbReference type="InterPro" id="IPR023016">
    <property type="entry name" value="Isoase_HisA-like_bact"/>
</dbReference>
<dbReference type="InterPro" id="IPR011060">
    <property type="entry name" value="RibuloseP-bd_barrel"/>
</dbReference>
<dbReference type="NCBIfam" id="TIGR00007">
    <property type="entry name" value="1-(5-phosphoribosyl)-5-[(5-phosphoribosylamino)methylideneamino]imidazole-4-carboxamide isomerase"/>
    <property type="match status" value="1"/>
</dbReference>
<dbReference type="PANTHER" id="PTHR43090">
    <property type="entry name" value="1-(5-PHOSPHORIBOSYL)-5-[(5-PHOSPHORIBOSYLAMINO)METHYLIDENEAMINO] IMIDAZOLE-4-CARBOXAMIDE ISOMERASE"/>
    <property type="match status" value="1"/>
</dbReference>
<dbReference type="PANTHER" id="PTHR43090:SF2">
    <property type="entry name" value="1-(5-PHOSPHORIBOSYL)-5-[(5-PHOSPHORIBOSYLAMINO)METHYLIDENEAMINO] IMIDAZOLE-4-CARBOXAMIDE ISOMERASE"/>
    <property type="match status" value="1"/>
</dbReference>
<dbReference type="Pfam" id="PF00977">
    <property type="entry name" value="His_biosynth"/>
    <property type="match status" value="1"/>
</dbReference>
<dbReference type="SUPFAM" id="SSF51366">
    <property type="entry name" value="Ribulose-phoshate binding barrel"/>
    <property type="match status" value="1"/>
</dbReference>
<protein>
    <recommendedName>
        <fullName evidence="1">1-(5-phosphoribosyl)-5-[(5-phosphoribosylamino)methylideneamino] imidazole-4-carboxamide isomerase</fullName>
        <ecNumber evidence="1">5.3.1.16</ecNumber>
    </recommendedName>
    <alternativeName>
        <fullName evidence="1">Phosphoribosylformimino-5-aminoimidazole carboxamide ribotide isomerase</fullName>
    </alternativeName>
</protein>